<comment type="function">
    <text>Essential component for signaling from various receptor tyrosine kinases such as Sevenless, TORSO and DER. Required for photoreceptor cell and wing development.</text>
</comment>
<comment type="subunit">
    <text evidence="6">Interacts with DRK.</text>
</comment>
<comment type="interaction">
    <interactant intactId="EBI-104022">
        <id>Q9VZZ9</id>
    </interactant>
    <interactant intactId="EBI-161391">
        <id>Q08012</id>
        <label>drk</label>
    </interactant>
    <organismsDiffer>false</organismsDiffer>
    <experiments>6</experiments>
</comment>
<comment type="subcellular location">
    <subcellularLocation>
        <location evidence="5">Cytoplasm</location>
    </subcellularLocation>
    <subcellularLocation>
        <location evidence="5">Membrane</location>
        <topology evidence="5">Peripheral membrane protein</topology>
        <orientation evidence="5">Cytoplasmic side</orientation>
    </subcellularLocation>
</comment>
<comment type="alternative products">
    <event type="alternative splicing"/>
    <isoform>
        <id>Q9VZZ9-1</id>
        <name>1</name>
        <sequence type="displayed"/>
    </isoform>
    <isoform>
        <id>Q9VZZ9-2</id>
        <name>2</name>
        <sequence type="described" ref="VSP_035054"/>
    </isoform>
</comment>
<comment type="developmental stage">
    <text evidence="10">Present in larva (at protein level).</text>
</comment>
<comment type="PTM">
    <text evidence="4 7 8 9">Phosphorylated on Tyr-801 and Tyr-854 in response to sevenless activation, which initiates the recruitment of the phosphatase CSW.</text>
</comment>
<feature type="chain" id="PRO_0000347179" description="Protein daughter of sevenless">
    <location>
        <begin position="1"/>
        <end position="878"/>
    </location>
</feature>
<feature type="domain" description="PH" evidence="2">
    <location>
        <begin position="3"/>
        <end position="113"/>
    </location>
</feature>
<feature type="region of interest" description="Disordered" evidence="3">
    <location>
        <begin position="132"/>
        <end position="176"/>
    </location>
</feature>
<feature type="region of interest" description="Disordered" evidence="3">
    <location>
        <begin position="391"/>
        <end position="437"/>
    </location>
</feature>
<feature type="region of interest" description="Interaction with DRK 1">
    <location>
        <begin position="638"/>
        <end position="650"/>
    </location>
</feature>
<feature type="region of interest" description="Disordered" evidence="3">
    <location>
        <begin position="686"/>
        <end position="721"/>
    </location>
</feature>
<feature type="region of interest" description="Interaction with DRK 2">
    <location>
        <begin position="690"/>
        <end position="702"/>
    </location>
</feature>
<feature type="region of interest" description="Disordered" evidence="3">
    <location>
        <begin position="749"/>
        <end position="773"/>
    </location>
</feature>
<feature type="coiled-coil region" evidence="1">
    <location>
        <begin position="246"/>
        <end position="275"/>
    </location>
</feature>
<feature type="compositionally biased region" description="Low complexity" evidence="3">
    <location>
        <begin position="136"/>
        <end position="159"/>
    </location>
</feature>
<feature type="compositionally biased region" description="Polar residues" evidence="3">
    <location>
        <begin position="160"/>
        <end position="169"/>
    </location>
</feature>
<feature type="compositionally biased region" description="Polar residues" evidence="3">
    <location>
        <begin position="707"/>
        <end position="718"/>
    </location>
</feature>
<feature type="compositionally biased region" description="Polar residues" evidence="3">
    <location>
        <begin position="760"/>
        <end position="770"/>
    </location>
</feature>
<feature type="modified residue" description="Phosphoserine" evidence="8">
    <location>
        <position position="399"/>
    </location>
</feature>
<feature type="modified residue" description="Phosphothreonine" evidence="7">
    <location>
        <position position="481"/>
    </location>
</feature>
<feature type="modified residue" description="Phosphothreonine" evidence="7">
    <location>
        <position position="771"/>
    </location>
</feature>
<feature type="modified residue" description="Phosphotyrosine" evidence="4 7">
    <location>
        <position position="801"/>
    </location>
</feature>
<feature type="modified residue" description="Phosphotyrosine" evidence="4">
    <location>
        <position position="854"/>
    </location>
</feature>
<feature type="splice variant" id="VSP_035054" description="In isoform 2." evidence="11">
    <location>
        <begin position="1"/>
        <end position="80"/>
    </location>
</feature>
<feature type="mutagenesis site" description="Abolishes function in photoreceptor cell development." evidence="5">
    <original>W</original>
    <variation>A</variation>
    <location>
        <position position="104"/>
    </location>
</feature>
<feature type="mutagenesis site" description="Impairs interaction with DRK." evidence="6">
    <original>R</original>
    <variation>K</variation>
    <location>
        <position position="644"/>
    </location>
</feature>
<feature type="mutagenesis site" description="Impairs interaction with DRK." evidence="6">
    <original>R</original>
    <variation>K</variation>
    <location>
        <position position="696"/>
    </location>
</feature>
<feature type="mutagenesis site" description="Abolishes function in photoreceptor cell development." evidence="5">
    <original>Y</original>
    <variation>F</variation>
    <location>
        <position position="801"/>
    </location>
</feature>
<feature type="sequence conflict" description="In Ref. 1; CAA66076." evidence="12" ref="1">
    <original>P</original>
    <variation>A</variation>
    <location>
        <position position="474"/>
    </location>
</feature>
<protein>
    <recommendedName>
        <fullName>Protein daughter of sevenless</fullName>
    </recommendedName>
</protein>
<dbReference type="EMBL" id="X97447">
    <property type="protein sequence ID" value="CAA66076.1"/>
    <property type="molecule type" value="mRNA"/>
</dbReference>
<dbReference type="EMBL" id="AE014296">
    <property type="protein sequence ID" value="AAF47662.1"/>
    <property type="molecule type" value="Genomic_DNA"/>
</dbReference>
<dbReference type="EMBL" id="AE014296">
    <property type="protein sequence ID" value="AAF47663.2"/>
    <property type="molecule type" value="Genomic_DNA"/>
</dbReference>
<dbReference type="EMBL" id="AY122244">
    <property type="protein sequence ID" value="AAM52756.1"/>
    <property type="molecule type" value="mRNA"/>
</dbReference>
<dbReference type="RefSeq" id="NP_523890.2">
    <molecule id="Q9VZZ9-1"/>
    <property type="nucleotide sequence ID" value="NM_079166.3"/>
</dbReference>
<dbReference type="RefSeq" id="NP_728757.1">
    <molecule id="Q9VZZ9-2"/>
    <property type="nucleotide sequence ID" value="NM_167956.2"/>
</dbReference>
<dbReference type="SMR" id="Q9VZZ9"/>
<dbReference type="BioGRID" id="63826">
    <property type="interactions" value="54"/>
</dbReference>
<dbReference type="FunCoup" id="Q9VZZ9">
    <property type="interactions" value="313"/>
</dbReference>
<dbReference type="IntAct" id="Q9VZZ9">
    <property type="interactions" value="12"/>
</dbReference>
<dbReference type="MINT" id="Q9VZZ9"/>
<dbReference type="STRING" id="7227.FBpp0072803"/>
<dbReference type="iPTMnet" id="Q9VZZ9"/>
<dbReference type="PaxDb" id="7227-FBpp0072803"/>
<dbReference type="DNASU" id="38321"/>
<dbReference type="EnsemblMetazoa" id="FBtr0072926">
    <molecule id="Q9VZZ9-1"/>
    <property type="protein sequence ID" value="FBpp0072803"/>
    <property type="gene ID" value="FBgn0016794"/>
</dbReference>
<dbReference type="EnsemblMetazoa" id="FBtr0072927">
    <molecule id="Q9VZZ9-2"/>
    <property type="protein sequence ID" value="FBpp0072804"/>
    <property type="gene ID" value="FBgn0016794"/>
</dbReference>
<dbReference type="GeneID" id="38321"/>
<dbReference type="KEGG" id="dme:Dmel_CG1044"/>
<dbReference type="UCSC" id="CG1044-RA">
    <molecule id="Q9VZZ9-1"/>
    <property type="organism name" value="d. melanogaster"/>
</dbReference>
<dbReference type="UCSC" id="CG1044-RB">
    <property type="organism name" value="d. melanogaster"/>
</dbReference>
<dbReference type="AGR" id="FB:FBgn0016794"/>
<dbReference type="CTD" id="38321"/>
<dbReference type="FlyBase" id="FBgn0016794">
    <property type="gene designation" value="dos"/>
</dbReference>
<dbReference type="VEuPathDB" id="VectorBase:FBgn0016794"/>
<dbReference type="eggNOG" id="KOG3751">
    <property type="taxonomic scope" value="Eukaryota"/>
</dbReference>
<dbReference type="GeneTree" id="ENSGT00940000175323"/>
<dbReference type="HOGENOM" id="CLU_351684_0_0_1"/>
<dbReference type="InParanoid" id="Q9VZZ9"/>
<dbReference type="OMA" id="FYEGWLI"/>
<dbReference type="OrthoDB" id="67516at2759"/>
<dbReference type="PhylomeDB" id="Q9VZZ9"/>
<dbReference type="Reactome" id="R-DME-109704">
    <property type="pathway name" value="PI3K Cascade"/>
</dbReference>
<dbReference type="Reactome" id="R-DME-1257604">
    <property type="pathway name" value="PIP3 activates AKT signaling"/>
</dbReference>
<dbReference type="Reactome" id="R-DME-180292">
    <property type="pathway name" value="GAB1 signalosome"/>
</dbReference>
<dbReference type="Reactome" id="R-DME-1963642">
    <property type="pathway name" value="PI3K events in ERBB2 signaling"/>
</dbReference>
<dbReference type="Reactome" id="R-DME-2730905">
    <property type="pathway name" value="Role of LAT2/NTAL/LAB on calcium mobilization"/>
</dbReference>
<dbReference type="Reactome" id="R-DME-5654689">
    <property type="pathway name" value="PI-3K cascade:FGFR1"/>
</dbReference>
<dbReference type="Reactome" id="R-DME-5654695">
    <property type="pathway name" value="PI-3K cascade:FGFR2"/>
</dbReference>
<dbReference type="Reactome" id="R-DME-5654710">
    <property type="pathway name" value="PI-3K cascade:FGFR3"/>
</dbReference>
<dbReference type="Reactome" id="R-DME-5654720">
    <property type="pathway name" value="PI-3K cascade:FGFR4"/>
</dbReference>
<dbReference type="Reactome" id="R-DME-6811558">
    <property type="pathway name" value="PI5P, PP2A and IER3 Regulate PI3K/AKT Signaling"/>
</dbReference>
<dbReference type="Reactome" id="R-DME-8853659">
    <property type="pathway name" value="RET signaling"/>
</dbReference>
<dbReference type="Reactome" id="R-DME-9027276">
    <property type="pathway name" value="Erythropoietin activates Phosphoinositide-3-kinase (PI3K)"/>
</dbReference>
<dbReference type="Reactome" id="R-DME-9674555">
    <property type="pathway name" value="Signaling by CSF3 (G-CSF)"/>
</dbReference>
<dbReference type="SignaLink" id="Q9VZZ9"/>
<dbReference type="BioGRID-ORCS" id="38321">
    <property type="hits" value="0 hits in 3 CRISPR screens"/>
</dbReference>
<dbReference type="GenomeRNAi" id="38321"/>
<dbReference type="PRO" id="PR:Q9VZZ9"/>
<dbReference type="Proteomes" id="UP000000803">
    <property type="component" value="Chromosome 3L"/>
</dbReference>
<dbReference type="Bgee" id="FBgn0016794">
    <property type="expression patterns" value="Expressed in cleaving embryo and 166 other cell types or tissues"/>
</dbReference>
<dbReference type="ExpressionAtlas" id="Q9VZZ9">
    <property type="expression patterns" value="baseline and differential"/>
</dbReference>
<dbReference type="GO" id="GO:0005737">
    <property type="term" value="C:cytoplasm"/>
    <property type="evidence" value="ECO:0000314"/>
    <property type="project" value="UniProtKB"/>
</dbReference>
<dbReference type="GO" id="GO:0005886">
    <property type="term" value="C:plasma membrane"/>
    <property type="evidence" value="ECO:0000314"/>
    <property type="project" value="FlyBase"/>
</dbReference>
<dbReference type="GO" id="GO:0042169">
    <property type="term" value="F:SH2 domain binding"/>
    <property type="evidence" value="ECO:0000353"/>
    <property type="project" value="FlyBase"/>
</dbReference>
<dbReference type="GO" id="GO:0035591">
    <property type="term" value="F:signaling adaptor activity"/>
    <property type="evidence" value="ECO:0000318"/>
    <property type="project" value="GO_Central"/>
</dbReference>
<dbReference type="GO" id="GO:0008595">
    <property type="term" value="P:anterior/posterior axis specification, embryo"/>
    <property type="evidence" value="ECO:0000304"/>
    <property type="project" value="FlyBase"/>
</dbReference>
<dbReference type="GO" id="GO:0042461">
    <property type="term" value="P:photoreceptor cell development"/>
    <property type="evidence" value="ECO:0000315"/>
    <property type="project" value="UniProtKB"/>
</dbReference>
<dbReference type="GO" id="GO:0007465">
    <property type="term" value="P:R7 cell fate commitment"/>
    <property type="evidence" value="ECO:0000315"/>
    <property type="project" value="FlyBase"/>
</dbReference>
<dbReference type="GO" id="GO:0046578">
    <property type="term" value="P:regulation of Ras protein signal transduction"/>
    <property type="evidence" value="ECO:0000315"/>
    <property type="project" value="UniProtKB"/>
</dbReference>
<dbReference type="GO" id="GO:0045500">
    <property type="term" value="P:sevenless signaling pathway"/>
    <property type="evidence" value="ECO:0000314"/>
    <property type="project" value="FlyBase"/>
</dbReference>
<dbReference type="GO" id="GO:0007165">
    <property type="term" value="P:signal transduction"/>
    <property type="evidence" value="ECO:0000318"/>
    <property type="project" value="GO_Central"/>
</dbReference>
<dbReference type="GO" id="GO:0008293">
    <property type="term" value="P:torso signaling pathway"/>
    <property type="evidence" value="ECO:0000315"/>
    <property type="project" value="FlyBase"/>
</dbReference>
<dbReference type="CDD" id="cd13384">
    <property type="entry name" value="PH_Gab2_2"/>
    <property type="match status" value="1"/>
</dbReference>
<dbReference type="FunFam" id="2.30.29.30:FF:000286">
    <property type="entry name" value="PH-protein kinase domain containing protein"/>
    <property type="match status" value="1"/>
</dbReference>
<dbReference type="Gene3D" id="2.30.29.30">
    <property type="entry name" value="Pleckstrin-homology domain (PH domain)/Phosphotyrosine-binding domain (PTB)"/>
    <property type="match status" value="1"/>
</dbReference>
<dbReference type="InterPro" id="IPR046355">
    <property type="entry name" value="Gab1-4-like"/>
</dbReference>
<dbReference type="InterPro" id="IPR011993">
    <property type="entry name" value="PH-like_dom_sf"/>
</dbReference>
<dbReference type="InterPro" id="IPR001849">
    <property type="entry name" value="PH_domain"/>
</dbReference>
<dbReference type="PANTHER" id="PTHR45960">
    <property type="entry name" value="GRB2-ASSOCIATED-BINDING PROTEIN"/>
    <property type="match status" value="1"/>
</dbReference>
<dbReference type="PANTHER" id="PTHR45960:SF2">
    <property type="entry name" value="PROTEIN DAUGHTER OF SEVENLESS"/>
    <property type="match status" value="1"/>
</dbReference>
<dbReference type="Pfam" id="PF00169">
    <property type="entry name" value="PH"/>
    <property type="match status" value="1"/>
</dbReference>
<dbReference type="SMART" id="SM00233">
    <property type="entry name" value="PH"/>
    <property type="match status" value="1"/>
</dbReference>
<dbReference type="SUPFAM" id="SSF50729">
    <property type="entry name" value="PH domain-like"/>
    <property type="match status" value="1"/>
</dbReference>
<dbReference type="PROSITE" id="PS50003">
    <property type="entry name" value="PH_DOMAIN"/>
    <property type="match status" value="1"/>
</dbReference>
<accession>Q9VZZ9</accession>
<accession>Q24452</accession>
<accession>Q9W000</accession>
<name>DOS_DROME</name>
<reference key="1">
    <citation type="journal article" date="1996" name="Cell">
        <title>Dos, a novel PH domain containing protein required for signal transduction between Sevenless and Ras1 in Drosophila.</title>
        <authorList>
            <person name="Raabe T."/>
            <person name="Riesgo-Escovar J."/>
            <person name="Liu X."/>
            <person name="Bausenwein B.S."/>
            <person name="Deak P."/>
            <person name="Maroy P."/>
            <person name="Hafen E."/>
        </authorList>
    </citation>
    <scope>NUCLEOTIDE SEQUENCE [MRNA] (ISOFORM 1)</scope>
    <scope>DEVELOPMENTAL STAGE</scope>
</reference>
<reference key="2">
    <citation type="journal article" date="2000" name="Science">
        <title>The genome sequence of Drosophila melanogaster.</title>
        <authorList>
            <person name="Adams M.D."/>
            <person name="Celniker S.E."/>
            <person name="Holt R.A."/>
            <person name="Evans C.A."/>
            <person name="Gocayne J.D."/>
            <person name="Amanatides P.G."/>
            <person name="Scherer S.E."/>
            <person name="Li P.W."/>
            <person name="Hoskins R.A."/>
            <person name="Galle R.F."/>
            <person name="George R.A."/>
            <person name="Lewis S.E."/>
            <person name="Richards S."/>
            <person name="Ashburner M."/>
            <person name="Henderson S.N."/>
            <person name="Sutton G.G."/>
            <person name="Wortman J.R."/>
            <person name="Yandell M.D."/>
            <person name="Zhang Q."/>
            <person name="Chen L.X."/>
            <person name="Brandon R.C."/>
            <person name="Rogers Y.-H.C."/>
            <person name="Blazej R.G."/>
            <person name="Champe M."/>
            <person name="Pfeiffer B.D."/>
            <person name="Wan K.H."/>
            <person name="Doyle C."/>
            <person name="Baxter E.G."/>
            <person name="Helt G."/>
            <person name="Nelson C.R."/>
            <person name="Miklos G.L.G."/>
            <person name="Abril J.F."/>
            <person name="Agbayani A."/>
            <person name="An H.-J."/>
            <person name="Andrews-Pfannkoch C."/>
            <person name="Baldwin D."/>
            <person name="Ballew R.M."/>
            <person name="Basu A."/>
            <person name="Baxendale J."/>
            <person name="Bayraktaroglu L."/>
            <person name="Beasley E.M."/>
            <person name="Beeson K.Y."/>
            <person name="Benos P.V."/>
            <person name="Berman B.P."/>
            <person name="Bhandari D."/>
            <person name="Bolshakov S."/>
            <person name="Borkova D."/>
            <person name="Botchan M.R."/>
            <person name="Bouck J."/>
            <person name="Brokstein P."/>
            <person name="Brottier P."/>
            <person name="Burtis K.C."/>
            <person name="Busam D.A."/>
            <person name="Butler H."/>
            <person name="Cadieu E."/>
            <person name="Center A."/>
            <person name="Chandra I."/>
            <person name="Cherry J.M."/>
            <person name="Cawley S."/>
            <person name="Dahlke C."/>
            <person name="Davenport L.B."/>
            <person name="Davies P."/>
            <person name="de Pablos B."/>
            <person name="Delcher A."/>
            <person name="Deng Z."/>
            <person name="Mays A.D."/>
            <person name="Dew I."/>
            <person name="Dietz S.M."/>
            <person name="Dodson K."/>
            <person name="Doup L.E."/>
            <person name="Downes M."/>
            <person name="Dugan-Rocha S."/>
            <person name="Dunkov B.C."/>
            <person name="Dunn P."/>
            <person name="Durbin K.J."/>
            <person name="Evangelista C.C."/>
            <person name="Ferraz C."/>
            <person name="Ferriera S."/>
            <person name="Fleischmann W."/>
            <person name="Fosler C."/>
            <person name="Gabrielian A.E."/>
            <person name="Garg N.S."/>
            <person name="Gelbart W.M."/>
            <person name="Glasser K."/>
            <person name="Glodek A."/>
            <person name="Gong F."/>
            <person name="Gorrell J.H."/>
            <person name="Gu Z."/>
            <person name="Guan P."/>
            <person name="Harris M."/>
            <person name="Harris N.L."/>
            <person name="Harvey D.A."/>
            <person name="Heiman T.J."/>
            <person name="Hernandez J.R."/>
            <person name="Houck J."/>
            <person name="Hostin D."/>
            <person name="Houston K.A."/>
            <person name="Howland T.J."/>
            <person name="Wei M.-H."/>
            <person name="Ibegwam C."/>
            <person name="Jalali M."/>
            <person name="Kalush F."/>
            <person name="Karpen G.H."/>
            <person name="Ke Z."/>
            <person name="Kennison J.A."/>
            <person name="Ketchum K.A."/>
            <person name="Kimmel B.E."/>
            <person name="Kodira C.D."/>
            <person name="Kraft C.L."/>
            <person name="Kravitz S."/>
            <person name="Kulp D."/>
            <person name="Lai Z."/>
            <person name="Lasko P."/>
            <person name="Lei Y."/>
            <person name="Levitsky A.A."/>
            <person name="Li J.H."/>
            <person name="Li Z."/>
            <person name="Liang Y."/>
            <person name="Lin X."/>
            <person name="Liu X."/>
            <person name="Mattei B."/>
            <person name="McIntosh T.C."/>
            <person name="McLeod M.P."/>
            <person name="McPherson D."/>
            <person name="Merkulov G."/>
            <person name="Milshina N.V."/>
            <person name="Mobarry C."/>
            <person name="Morris J."/>
            <person name="Moshrefi A."/>
            <person name="Mount S.M."/>
            <person name="Moy M."/>
            <person name="Murphy B."/>
            <person name="Murphy L."/>
            <person name="Muzny D.M."/>
            <person name="Nelson D.L."/>
            <person name="Nelson D.R."/>
            <person name="Nelson K.A."/>
            <person name="Nixon K."/>
            <person name="Nusskern D.R."/>
            <person name="Pacleb J.M."/>
            <person name="Palazzolo M."/>
            <person name="Pittman G.S."/>
            <person name="Pan S."/>
            <person name="Pollard J."/>
            <person name="Puri V."/>
            <person name="Reese M.G."/>
            <person name="Reinert K."/>
            <person name="Remington K."/>
            <person name="Saunders R.D.C."/>
            <person name="Scheeler F."/>
            <person name="Shen H."/>
            <person name="Shue B.C."/>
            <person name="Siden-Kiamos I."/>
            <person name="Simpson M."/>
            <person name="Skupski M.P."/>
            <person name="Smith T.J."/>
            <person name="Spier E."/>
            <person name="Spradling A.C."/>
            <person name="Stapleton M."/>
            <person name="Strong R."/>
            <person name="Sun E."/>
            <person name="Svirskas R."/>
            <person name="Tector C."/>
            <person name="Turner R."/>
            <person name="Venter E."/>
            <person name="Wang A.H."/>
            <person name="Wang X."/>
            <person name="Wang Z.-Y."/>
            <person name="Wassarman D.A."/>
            <person name="Weinstock G.M."/>
            <person name="Weissenbach J."/>
            <person name="Williams S.M."/>
            <person name="Woodage T."/>
            <person name="Worley K.C."/>
            <person name="Wu D."/>
            <person name="Yang S."/>
            <person name="Yao Q.A."/>
            <person name="Ye J."/>
            <person name="Yeh R.-F."/>
            <person name="Zaveri J.S."/>
            <person name="Zhan M."/>
            <person name="Zhang G."/>
            <person name="Zhao Q."/>
            <person name="Zheng L."/>
            <person name="Zheng X.H."/>
            <person name="Zhong F.N."/>
            <person name="Zhong W."/>
            <person name="Zhou X."/>
            <person name="Zhu S.C."/>
            <person name="Zhu X."/>
            <person name="Smith H.O."/>
            <person name="Gibbs R.A."/>
            <person name="Myers E.W."/>
            <person name="Rubin G.M."/>
            <person name="Venter J.C."/>
        </authorList>
    </citation>
    <scope>NUCLEOTIDE SEQUENCE [LARGE SCALE GENOMIC DNA]</scope>
    <source>
        <strain>Berkeley</strain>
    </source>
</reference>
<reference key="3">
    <citation type="journal article" date="2002" name="Genome Biol.">
        <title>Annotation of the Drosophila melanogaster euchromatic genome: a systematic review.</title>
        <authorList>
            <person name="Misra S."/>
            <person name="Crosby M.A."/>
            <person name="Mungall C.J."/>
            <person name="Matthews B.B."/>
            <person name="Campbell K.S."/>
            <person name="Hradecky P."/>
            <person name="Huang Y."/>
            <person name="Kaminker J.S."/>
            <person name="Millburn G.H."/>
            <person name="Prochnik S.E."/>
            <person name="Smith C.D."/>
            <person name="Tupy J.L."/>
            <person name="Whitfield E.J."/>
            <person name="Bayraktaroglu L."/>
            <person name="Berman B.P."/>
            <person name="Bettencourt B.R."/>
            <person name="Celniker S.E."/>
            <person name="de Grey A.D.N.J."/>
            <person name="Drysdale R.A."/>
            <person name="Harris N.L."/>
            <person name="Richter J."/>
            <person name="Russo S."/>
            <person name="Schroeder A.J."/>
            <person name="Shu S.Q."/>
            <person name="Stapleton M."/>
            <person name="Yamada C."/>
            <person name="Ashburner M."/>
            <person name="Gelbart W.M."/>
            <person name="Rubin G.M."/>
            <person name="Lewis S.E."/>
        </authorList>
    </citation>
    <scope>GENOME REANNOTATION</scope>
    <scope>ALTERNATIVE SPLICING</scope>
    <source>
        <strain>Berkeley</strain>
    </source>
</reference>
<reference key="4">
    <citation type="journal article" date="2002" name="Genome Biol.">
        <title>A Drosophila full-length cDNA resource.</title>
        <authorList>
            <person name="Stapleton M."/>
            <person name="Carlson J.W."/>
            <person name="Brokstein P."/>
            <person name="Yu C."/>
            <person name="Champe M."/>
            <person name="George R.A."/>
            <person name="Guarin H."/>
            <person name="Kronmiller B."/>
            <person name="Pacleb J.M."/>
            <person name="Park S."/>
            <person name="Wan K.H."/>
            <person name="Rubin G.M."/>
            <person name="Celniker S.E."/>
        </authorList>
    </citation>
    <scope>NUCLEOTIDE SEQUENCE [LARGE SCALE MRNA] (ISOFORM 2)</scope>
    <source>
        <strain>Berkeley</strain>
        <tissue>Embryo</tissue>
    </source>
</reference>
<reference key="5">
    <citation type="journal article" date="1996" name="Cell">
        <title>Daughter of sevenless is a substrate of the phosphotyrosine phosphatase Corkscrew and functions during sevenless signaling.</title>
        <authorList>
            <person name="Herbst R."/>
            <person name="Carroll P.M."/>
            <person name="Allard J.D."/>
            <person name="Schilling J."/>
            <person name="Raabe T."/>
            <person name="Simon M.A."/>
        </authorList>
    </citation>
    <scope>PROTEIN SEQUENCE OF 818-829</scope>
    <scope>PHOSPHORYLATION</scope>
</reference>
<reference key="6">
    <citation type="journal article" date="1999" name="EMBO J.">
        <title>Recruitment of the protein tyrosine phosphatase CSW by DOS is an essential step during signaling by the sevenless receptor tyrosine kinase.</title>
        <authorList>
            <person name="Herbst R."/>
            <person name="Zhang X."/>
            <person name="Qin J."/>
            <person name="Simon M.A."/>
        </authorList>
    </citation>
    <scope>PHOSPHORYLATION AT TYR-801 AND TYR-854</scope>
</reference>
<reference key="7">
    <citation type="journal article" date="2000" name="Mech. Dev.">
        <title>In vivo functional analysis of the daughter of sevenless protein in receptor tyrosine kinase signaling.</title>
        <authorList>
            <person name="Bausenwein B.S."/>
            <person name="Schmidt M."/>
            <person name="Mielke B."/>
            <person name="Raabe T."/>
        </authorList>
    </citation>
    <scope>SUBCELLULAR LOCATION</scope>
    <scope>MUTAGENESIS OF TRP-104 AND TYR-801</scope>
</reference>
<reference key="8">
    <citation type="journal article" date="2002" name="Mech. Dev.">
        <title>SH3 domain-mediated binding of the Drk protein to Dos is an important step in signaling of Drosophila receptor tyrosine kinases.</title>
        <authorList>
            <person name="Feller S.M."/>
            <person name="Wecklein H."/>
            <person name="Lewitzky M."/>
            <person name="Kibler E."/>
            <person name="Raabe T."/>
        </authorList>
    </citation>
    <scope>INTERACTION WITH DRK</scope>
    <scope>MUTAGENESIS OF ARG-644 AND ARG-696</scope>
</reference>
<reference key="9">
    <citation type="journal article" date="2007" name="Mol. Biosyst.">
        <title>An integrated chemical, mass spectrometric and computational strategy for (quantitative) phosphoproteomics: application to Drosophila melanogaster Kc167 cells.</title>
        <authorList>
            <person name="Bodenmiller B."/>
            <person name="Mueller L.N."/>
            <person name="Pedrioli P.G.A."/>
            <person name="Pflieger D."/>
            <person name="Juenger M.A."/>
            <person name="Eng J.K."/>
            <person name="Aebersold R."/>
            <person name="Tao W.A."/>
        </authorList>
    </citation>
    <scope>PHOSPHORYLATION [LARGE SCALE ANALYSIS] AT THR-481; THR-771 AND TYR-801</scope>
    <scope>IDENTIFICATION BY MASS SPECTROMETRY</scope>
</reference>
<reference key="10">
    <citation type="journal article" date="2008" name="J. Proteome Res.">
        <title>Phosphoproteome analysis of Drosophila melanogaster embryos.</title>
        <authorList>
            <person name="Zhai B."/>
            <person name="Villen J."/>
            <person name="Beausoleil S.A."/>
            <person name="Mintseris J."/>
            <person name="Gygi S.P."/>
        </authorList>
    </citation>
    <scope>PHOSPHORYLATION [LARGE SCALE ANALYSIS] AT SER-399</scope>
    <scope>IDENTIFICATION BY MASS SPECTROMETRY</scope>
    <source>
        <tissue>Embryo</tissue>
    </source>
</reference>
<sequence length="878" mass="95536">MDRTFYEGWLIKSPPTKRIWRARWRRRYFTLKQGEIPEQFCLEYYTDHNCRKLKGVIDLDQCEQVDCGLRLENRKQKFQYMFDIKTPKRTYYLAAETEADMRDWVNCICQVCHLHDTKQSNELPLGAVGADENRTQHTSSSGGLSNSTQNTTTTSLHSSAGTTAPQASVPNAGGSAQLRRPAVIEEQPMPSNAGNNNSDSVYVNTEYSNRETMLCDANFDQQELLSAAQQQPPPSPATALYLNHSALIQAQAAAAAAEQLQQQQQQAARLAVSANGVVRKLPEHLVLTQQTLAEAAAQQHSSVQASPALSTASGPYIPISECFSGSPRFLPGVPLPGADLAIPNNPTTPLNNLDPKFYDTPRSHNNIGLNLTNDQSYSPKITNLSLQQLANNNASKQRSDSDSESVFTDDDEWAHPLPLRENVDRSTRPSDSSIENESFVLTYSQRFSKMPEEGGAIVPPAEKSSKLAGAASLPEAGDQGTLDKLAKVLKNKNNLILDFKENEKIPRDLPQLSDTENTSPAIVARRNAHSAFIEESYDIPRSHQQPYYNVNQLLGERPVTSPHNSNPIAASTPNLMAADLGAVAAISAAANPGLMGEAQAVASSPTSARTLPRHCYTNAAPTKMEGNVFRYDFMEQADCPPVNRKLKPKVAGGLPVVEDKPPEEFPAKPPVGVDQLTNKLGAAQLQQPIGPPSVDRKCKPNAYKLGNSATMSPATRRSSGAPLSMVLPHETDVHSPAAANAFFHETRTLPRQQHRHHPNSPGSMSVQHQRTASAAAAMMSLTAAAAPKQQAAAQTEHKLQYFDLDVTNKPPLLNRSSMSVGNLYSQGGNGASGMRFAGVEAGGARAPVPSSVVYRSVDFVKTEAFKRIREERESSGNK</sequence>
<proteinExistence type="evidence at protein level"/>
<keyword id="KW-0025">Alternative splicing</keyword>
<keyword id="KW-0175">Coiled coil</keyword>
<keyword id="KW-0963">Cytoplasm</keyword>
<keyword id="KW-0217">Developmental protein</keyword>
<keyword id="KW-0903">Direct protein sequencing</keyword>
<keyword id="KW-0472">Membrane</keyword>
<keyword id="KW-0597">Phosphoprotein</keyword>
<keyword id="KW-1185">Reference proteome</keyword>
<gene>
    <name type="primary">dos</name>
    <name type="ORF">CG1044</name>
</gene>
<evidence type="ECO:0000255" key="1"/>
<evidence type="ECO:0000255" key="2">
    <source>
        <dbReference type="PROSITE-ProRule" id="PRU00145"/>
    </source>
</evidence>
<evidence type="ECO:0000256" key="3">
    <source>
        <dbReference type="SAM" id="MobiDB-lite"/>
    </source>
</evidence>
<evidence type="ECO:0000269" key="4">
    <source>
    </source>
</evidence>
<evidence type="ECO:0000269" key="5">
    <source>
    </source>
</evidence>
<evidence type="ECO:0000269" key="6">
    <source>
    </source>
</evidence>
<evidence type="ECO:0000269" key="7">
    <source>
    </source>
</evidence>
<evidence type="ECO:0000269" key="8">
    <source>
    </source>
</evidence>
<evidence type="ECO:0000269" key="9">
    <source>
    </source>
</evidence>
<evidence type="ECO:0000269" key="10">
    <source>
    </source>
</evidence>
<evidence type="ECO:0000303" key="11">
    <source>
    </source>
</evidence>
<evidence type="ECO:0000305" key="12"/>
<organism>
    <name type="scientific">Drosophila melanogaster</name>
    <name type="common">Fruit fly</name>
    <dbReference type="NCBI Taxonomy" id="7227"/>
    <lineage>
        <taxon>Eukaryota</taxon>
        <taxon>Metazoa</taxon>
        <taxon>Ecdysozoa</taxon>
        <taxon>Arthropoda</taxon>
        <taxon>Hexapoda</taxon>
        <taxon>Insecta</taxon>
        <taxon>Pterygota</taxon>
        <taxon>Neoptera</taxon>
        <taxon>Endopterygota</taxon>
        <taxon>Diptera</taxon>
        <taxon>Brachycera</taxon>
        <taxon>Muscomorpha</taxon>
        <taxon>Ephydroidea</taxon>
        <taxon>Drosophilidae</taxon>
        <taxon>Drosophila</taxon>
        <taxon>Sophophora</taxon>
    </lineage>
</organism>